<comment type="function">
    <text evidence="1">Involved in the gluconeogenesis. Catalyzes the conversion of oxaloacetate (OAA) to phosphoenolpyruvate (PEP) through direct phosphoryl transfer between the nucleoside triphosphate and OAA.</text>
</comment>
<comment type="catalytic activity">
    <reaction evidence="1">
        <text>oxaloacetate + ATP = phosphoenolpyruvate + ADP + CO2</text>
        <dbReference type="Rhea" id="RHEA:18617"/>
        <dbReference type="ChEBI" id="CHEBI:16452"/>
        <dbReference type="ChEBI" id="CHEBI:16526"/>
        <dbReference type="ChEBI" id="CHEBI:30616"/>
        <dbReference type="ChEBI" id="CHEBI:58702"/>
        <dbReference type="ChEBI" id="CHEBI:456216"/>
        <dbReference type="EC" id="4.1.1.49"/>
    </reaction>
</comment>
<comment type="cofactor">
    <cofactor evidence="1">
        <name>Mn(2+)</name>
        <dbReference type="ChEBI" id="CHEBI:29035"/>
    </cofactor>
    <text evidence="1">Binds 1 Mn(2+) ion per subunit.</text>
</comment>
<comment type="pathway">
    <text evidence="1">Carbohydrate biosynthesis; gluconeogenesis.</text>
</comment>
<comment type="subcellular location">
    <subcellularLocation>
        <location evidence="1">Cytoplasm</location>
    </subcellularLocation>
</comment>
<comment type="similarity">
    <text evidence="1">Belongs to the phosphoenolpyruvate carboxykinase (ATP) family.</text>
</comment>
<accession>Q2RKS7</accession>
<proteinExistence type="inferred from homology"/>
<evidence type="ECO:0000255" key="1">
    <source>
        <dbReference type="HAMAP-Rule" id="MF_00453"/>
    </source>
</evidence>
<feature type="chain" id="PRO_0000236928" description="Phosphoenolpyruvate carboxykinase (ATP) 1">
    <location>
        <begin position="1"/>
        <end position="525"/>
    </location>
</feature>
<feature type="binding site" evidence="1">
    <location>
        <position position="55"/>
    </location>
    <ligand>
        <name>substrate</name>
    </ligand>
</feature>
<feature type="binding site" evidence="1">
    <location>
        <position position="190"/>
    </location>
    <ligand>
        <name>substrate</name>
    </ligand>
</feature>
<feature type="binding site" evidence="1">
    <location>
        <position position="196"/>
    </location>
    <ligand>
        <name>ATP</name>
        <dbReference type="ChEBI" id="CHEBI:30616"/>
    </ligand>
</feature>
<feature type="binding site" evidence="1">
    <location>
        <position position="196"/>
    </location>
    <ligand>
        <name>Mn(2+)</name>
        <dbReference type="ChEBI" id="CHEBI:29035"/>
    </ligand>
</feature>
<feature type="binding site" evidence="1">
    <location>
        <position position="196"/>
    </location>
    <ligand>
        <name>substrate</name>
    </ligand>
</feature>
<feature type="binding site" evidence="1">
    <location>
        <position position="215"/>
    </location>
    <ligand>
        <name>ATP</name>
        <dbReference type="ChEBI" id="CHEBI:30616"/>
    </ligand>
</feature>
<feature type="binding site" evidence="1">
    <location>
        <position position="215"/>
    </location>
    <ligand>
        <name>Mn(2+)</name>
        <dbReference type="ChEBI" id="CHEBI:29035"/>
    </ligand>
</feature>
<feature type="binding site" evidence="1">
    <location>
        <begin position="231"/>
        <end position="239"/>
    </location>
    <ligand>
        <name>ATP</name>
        <dbReference type="ChEBI" id="CHEBI:30616"/>
    </ligand>
</feature>
<feature type="binding site" evidence="1">
    <location>
        <position position="252"/>
    </location>
    <ligand>
        <name>Mn(2+)</name>
        <dbReference type="ChEBI" id="CHEBI:29035"/>
    </ligand>
</feature>
<feature type="binding site" evidence="1">
    <location>
        <position position="280"/>
    </location>
    <ligand>
        <name>ATP</name>
        <dbReference type="ChEBI" id="CHEBI:30616"/>
    </ligand>
</feature>
<feature type="binding site" evidence="1">
    <location>
        <position position="317"/>
    </location>
    <ligand>
        <name>ATP</name>
        <dbReference type="ChEBI" id="CHEBI:30616"/>
    </ligand>
</feature>
<feature type="binding site" evidence="1">
    <location>
        <position position="317"/>
    </location>
    <ligand>
        <name>substrate</name>
    </ligand>
</feature>
<feature type="binding site" evidence="1">
    <location>
        <position position="442"/>
    </location>
    <ligand>
        <name>ATP</name>
        <dbReference type="ChEBI" id="CHEBI:30616"/>
    </ligand>
</feature>
<organism>
    <name type="scientific">Moorella thermoacetica (strain ATCC 39073 / JCM 9320)</name>
    <dbReference type="NCBI Taxonomy" id="264732"/>
    <lineage>
        <taxon>Bacteria</taxon>
        <taxon>Bacillati</taxon>
        <taxon>Bacillota</taxon>
        <taxon>Clostridia</taxon>
        <taxon>Moorellales</taxon>
        <taxon>Moorellaceae</taxon>
        <taxon>Moorella</taxon>
    </lineage>
</organism>
<protein>
    <recommendedName>
        <fullName evidence="1">Phosphoenolpyruvate carboxykinase (ATP) 1</fullName>
        <shortName evidence="1">PCK 1</shortName>
        <shortName evidence="1">PEP carboxykinase 1</shortName>
        <shortName evidence="1">PEPCK 1</shortName>
        <ecNumber evidence="1">4.1.1.49</ecNumber>
    </recommendedName>
</protein>
<sequence>MSNTYGLERLGIINPGTIYRNLPMARLVEIALARGEGLLASNGALSVNTGKYTGRSPHDRYIVDTPAVHDSISWGAVNQPVSEATFERLYSRLTAYLQGKDLFVFDGFVGADPAYRMPIRIVNEYAWQNLFVHQLFIRPTAEELAGHEPRFTVICAPGFKAIPEEDGTRSEAFIILNFDRRLVIIGGTSYAGEMKKSIFTVMNYLLPEQGVCPMHCSANMGPAGDTALFFGLSGTGKTTLSADPERYLIGDDEHGWSDKGIFNFEGGCYAKCIKLSAEHEPQIWNAIRFGSVLENVMVDPDCRIIDYDSDALTENTRAAYPVDFIPNAVIPGVGGHPQTVVFLTADAFGVMPPIAKLTREQAMYYFLSGYTSKLAGTERGVTEPKATFSTCFGAPFLPRSPMVYANLLGERIARHNASVYLVNTGWTGGPYGTGRRMSLPYTRAMVRAALNGELDKVEFTPDPVFGFLVPKACPGVPAEILNPRNTWAETEKYDAMARKLASLFRENFAKFKDVPVSIQEAGVVG</sequence>
<dbReference type="EC" id="4.1.1.49" evidence="1"/>
<dbReference type="EMBL" id="CP000232">
    <property type="protein sequence ID" value="ABC18962.1"/>
    <property type="molecule type" value="Genomic_DNA"/>
</dbReference>
<dbReference type="RefSeq" id="YP_429505.1">
    <property type="nucleotide sequence ID" value="NC_007644.1"/>
</dbReference>
<dbReference type="SMR" id="Q2RKS7"/>
<dbReference type="STRING" id="264732.Moth_0633"/>
<dbReference type="EnsemblBacteria" id="ABC18962">
    <property type="protein sequence ID" value="ABC18962"/>
    <property type="gene ID" value="Moth_0633"/>
</dbReference>
<dbReference type="KEGG" id="mta:Moth_0633"/>
<dbReference type="PATRIC" id="fig|264732.11.peg.680"/>
<dbReference type="eggNOG" id="COG1866">
    <property type="taxonomic scope" value="Bacteria"/>
</dbReference>
<dbReference type="HOGENOM" id="CLU_018247_0_1_9"/>
<dbReference type="OrthoDB" id="9806325at2"/>
<dbReference type="UniPathway" id="UPA00138"/>
<dbReference type="GO" id="GO:0005829">
    <property type="term" value="C:cytosol"/>
    <property type="evidence" value="ECO:0007669"/>
    <property type="project" value="TreeGrafter"/>
</dbReference>
<dbReference type="GO" id="GO:0005524">
    <property type="term" value="F:ATP binding"/>
    <property type="evidence" value="ECO:0007669"/>
    <property type="project" value="UniProtKB-UniRule"/>
</dbReference>
<dbReference type="GO" id="GO:0046872">
    <property type="term" value="F:metal ion binding"/>
    <property type="evidence" value="ECO:0007669"/>
    <property type="project" value="UniProtKB-KW"/>
</dbReference>
<dbReference type="GO" id="GO:0004612">
    <property type="term" value="F:phosphoenolpyruvate carboxykinase (ATP) activity"/>
    <property type="evidence" value="ECO:0007669"/>
    <property type="project" value="UniProtKB-UniRule"/>
</dbReference>
<dbReference type="GO" id="GO:0006094">
    <property type="term" value="P:gluconeogenesis"/>
    <property type="evidence" value="ECO:0007669"/>
    <property type="project" value="UniProtKB-UniRule"/>
</dbReference>
<dbReference type="CDD" id="cd00484">
    <property type="entry name" value="PEPCK_ATP"/>
    <property type="match status" value="1"/>
</dbReference>
<dbReference type="FunFam" id="2.170.8.10:FF:000001">
    <property type="entry name" value="Phosphoenolpyruvate carboxykinase (ATP)"/>
    <property type="match status" value="1"/>
</dbReference>
<dbReference type="FunFam" id="3.40.449.10:FF:000001">
    <property type="entry name" value="Phosphoenolpyruvate carboxykinase (ATP)"/>
    <property type="match status" value="1"/>
</dbReference>
<dbReference type="Gene3D" id="3.90.228.20">
    <property type="match status" value="1"/>
</dbReference>
<dbReference type="Gene3D" id="3.40.449.10">
    <property type="entry name" value="Phosphoenolpyruvate Carboxykinase, domain 1"/>
    <property type="match status" value="1"/>
</dbReference>
<dbReference type="Gene3D" id="2.170.8.10">
    <property type="entry name" value="Phosphoenolpyruvate Carboxykinase, domain 2"/>
    <property type="match status" value="1"/>
</dbReference>
<dbReference type="HAMAP" id="MF_00453">
    <property type="entry name" value="PEPCK_ATP"/>
    <property type="match status" value="1"/>
</dbReference>
<dbReference type="InterPro" id="IPR001272">
    <property type="entry name" value="PEP_carboxykinase_ATP"/>
</dbReference>
<dbReference type="InterPro" id="IPR013035">
    <property type="entry name" value="PEP_carboxykinase_C"/>
</dbReference>
<dbReference type="InterPro" id="IPR008210">
    <property type="entry name" value="PEP_carboxykinase_N"/>
</dbReference>
<dbReference type="InterPro" id="IPR015994">
    <property type="entry name" value="PEPCK_ATP_CS"/>
</dbReference>
<dbReference type="NCBIfam" id="TIGR00224">
    <property type="entry name" value="pckA"/>
    <property type="match status" value="1"/>
</dbReference>
<dbReference type="NCBIfam" id="NF006820">
    <property type="entry name" value="PRK09344.1-2"/>
    <property type="match status" value="1"/>
</dbReference>
<dbReference type="NCBIfam" id="NF006821">
    <property type="entry name" value="PRK09344.1-3"/>
    <property type="match status" value="1"/>
</dbReference>
<dbReference type="PANTHER" id="PTHR30031:SF0">
    <property type="entry name" value="PHOSPHOENOLPYRUVATE CARBOXYKINASE (ATP)"/>
    <property type="match status" value="1"/>
</dbReference>
<dbReference type="PANTHER" id="PTHR30031">
    <property type="entry name" value="PHOSPHOENOLPYRUVATE CARBOXYKINASE ATP"/>
    <property type="match status" value="1"/>
</dbReference>
<dbReference type="Pfam" id="PF01293">
    <property type="entry name" value="PEPCK_ATP"/>
    <property type="match status" value="1"/>
</dbReference>
<dbReference type="PIRSF" id="PIRSF006294">
    <property type="entry name" value="PEP_crbxkin"/>
    <property type="match status" value="1"/>
</dbReference>
<dbReference type="SUPFAM" id="SSF68923">
    <property type="entry name" value="PEP carboxykinase N-terminal domain"/>
    <property type="match status" value="1"/>
</dbReference>
<dbReference type="SUPFAM" id="SSF53795">
    <property type="entry name" value="PEP carboxykinase-like"/>
    <property type="match status" value="1"/>
</dbReference>
<dbReference type="PROSITE" id="PS00532">
    <property type="entry name" value="PEPCK_ATP"/>
    <property type="match status" value="1"/>
</dbReference>
<keyword id="KW-0067">ATP-binding</keyword>
<keyword id="KW-0963">Cytoplasm</keyword>
<keyword id="KW-0210">Decarboxylase</keyword>
<keyword id="KW-0312">Gluconeogenesis</keyword>
<keyword id="KW-0456">Lyase</keyword>
<keyword id="KW-0464">Manganese</keyword>
<keyword id="KW-0479">Metal-binding</keyword>
<keyword id="KW-0547">Nucleotide-binding</keyword>
<reference key="1">
    <citation type="journal article" date="2008" name="Environ. Microbiol.">
        <title>The complete genome sequence of Moorella thermoacetica (f. Clostridium thermoaceticum).</title>
        <authorList>
            <person name="Pierce E."/>
            <person name="Xie G."/>
            <person name="Barabote R.D."/>
            <person name="Saunders E."/>
            <person name="Han C.S."/>
            <person name="Detter J.C."/>
            <person name="Richardson P."/>
            <person name="Brettin T.S."/>
            <person name="Das A."/>
            <person name="Ljungdahl L.G."/>
            <person name="Ragsdale S.W."/>
        </authorList>
    </citation>
    <scope>NUCLEOTIDE SEQUENCE [LARGE SCALE GENOMIC DNA]</scope>
    <source>
        <strain>ATCC 39073 / JCM 9320</strain>
    </source>
</reference>
<name>PCKA1_MOOTA</name>
<gene>
    <name evidence="1" type="primary">pckA1</name>
    <name type="ordered locus">Moth_0633</name>
</gene>